<proteinExistence type="inferred from homology"/>
<keyword id="KW-1015">Disulfide bond</keyword>
<keyword id="KW-0325">Glycoprotein</keyword>
<keyword id="KW-0960">Knottin</keyword>
<keyword id="KW-0964">Secreted</keyword>
<keyword id="KW-0732">Signal</keyword>
<organism>
    <name type="scientific">Macaca assamensis</name>
    <name type="common">Assam macaque</name>
    <name type="synonym">Assamese macaque</name>
    <dbReference type="NCBI Taxonomy" id="9551"/>
    <lineage>
        <taxon>Eukaryota</taxon>
        <taxon>Metazoa</taxon>
        <taxon>Chordata</taxon>
        <taxon>Craniata</taxon>
        <taxon>Vertebrata</taxon>
        <taxon>Euteleostomi</taxon>
        <taxon>Mammalia</taxon>
        <taxon>Eutheria</taxon>
        <taxon>Euarchontoglires</taxon>
        <taxon>Primates</taxon>
        <taxon>Haplorrhini</taxon>
        <taxon>Catarrhini</taxon>
        <taxon>Cercopithecidae</taxon>
        <taxon>Cercopithecinae</taxon>
        <taxon>Macaca</taxon>
    </lineage>
</organism>
<evidence type="ECO:0000250" key="1"/>
<evidence type="ECO:0000250" key="2">
    <source>
        <dbReference type="UniProtKB" id="P42127"/>
    </source>
</evidence>
<evidence type="ECO:0000250" key="3">
    <source>
        <dbReference type="UniProtKB" id="Q03288"/>
    </source>
</evidence>
<evidence type="ECO:0000255" key="4"/>
<evidence type="ECO:0000255" key="5">
    <source>
        <dbReference type="PROSITE-ProRule" id="PRU00494"/>
    </source>
</evidence>
<evidence type="ECO:0000256" key="6">
    <source>
        <dbReference type="SAM" id="MobiDB-lite"/>
    </source>
</evidence>
<sequence>MDVTRLLLATLLVFLCFFTAYSHPPPEEKLRDDRSLRSNSSVNLLDFPSVSIVALNKKSKQTSRKEAEKKRSSKKEASMKKVARPRTPLSAPCVATRDSCKPPAPACCDPCASCQCRFFRSACSCRVLSLNC</sequence>
<reference key="1">
    <citation type="submission" date="2007-03" db="EMBL/GenBank/DDBJ databases">
        <title>Association of the agouti signaling protein gene with coat color variation in the macaques.</title>
        <authorList>
            <person name="Nakayama K."/>
            <person name="Shotake T."/>
            <person name="Takenaka O."/>
            <person name="Ishida T."/>
        </authorList>
    </citation>
    <scope>NUCLEOTIDE SEQUENCE [GENOMIC DNA]</scope>
</reference>
<comment type="function">
    <text evidence="3">Involved in the regulation of melanogenesis. The binding of ASP to MC1R precludes alpha-MSH initiated signaling and thus blocks production of cAMP, leading to a down-regulation of eumelanogenesis (brown/black pigment) and thus increasing synthesis of pheomelanin (yellow/red pigment) (By similarity).</text>
</comment>
<comment type="subcellular location">
    <subcellularLocation>
        <location evidence="2">Secreted</location>
    </subcellularLocation>
</comment>
<comment type="domain">
    <text evidence="1">The presence of a 'disulfide through disulfide knot' structurally defines this protein as a knottin.</text>
</comment>
<protein>
    <recommendedName>
        <fullName>Agouti-signaling protein</fullName>
        <shortName>ASP</shortName>
    </recommendedName>
    <alternativeName>
        <fullName>Agouti switch protein</fullName>
    </alternativeName>
</protein>
<dbReference type="EMBL" id="AB299219">
    <property type="protein sequence ID" value="BAF80803.1"/>
    <property type="molecule type" value="Genomic_DNA"/>
</dbReference>
<dbReference type="GlyCosmos" id="A8CEN3">
    <property type="glycosylation" value="1 site, No reported glycans"/>
</dbReference>
<dbReference type="GO" id="GO:0005615">
    <property type="term" value="C:extracellular space"/>
    <property type="evidence" value="ECO:0000250"/>
    <property type="project" value="UniProtKB"/>
</dbReference>
<dbReference type="GO" id="GO:0031779">
    <property type="term" value="F:melanocortin receptor binding"/>
    <property type="evidence" value="ECO:0007669"/>
    <property type="project" value="TreeGrafter"/>
</dbReference>
<dbReference type="GO" id="GO:0005184">
    <property type="term" value="F:neuropeptide hormone activity"/>
    <property type="evidence" value="ECO:0007669"/>
    <property type="project" value="TreeGrafter"/>
</dbReference>
<dbReference type="GO" id="GO:0009755">
    <property type="term" value="P:hormone-mediated signaling pathway"/>
    <property type="evidence" value="ECO:0007669"/>
    <property type="project" value="InterPro"/>
</dbReference>
<dbReference type="GO" id="GO:0042438">
    <property type="term" value="P:melanin biosynthetic process"/>
    <property type="evidence" value="ECO:0000250"/>
    <property type="project" value="UniProtKB"/>
</dbReference>
<dbReference type="GO" id="GO:0032438">
    <property type="term" value="P:melanosome organization"/>
    <property type="evidence" value="ECO:0007669"/>
    <property type="project" value="TreeGrafter"/>
</dbReference>
<dbReference type="FunFam" id="4.10.760.10:FF:000002">
    <property type="entry name" value="Agouti-signaling protein"/>
    <property type="match status" value="1"/>
</dbReference>
<dbReference type="Gene3D" id="4.10.760.10">
    <property type="entry name" value="Agouti domain"/>
    <property type="match status" value="1"/>
</dbReference>
<dbReference type="InterPro" id="IPR007733">
    <property type="entry name" value="Agouti"/>
</dbReference>
<dbReference type="InterPro" id="IPR027300">
    <property type="entry name" value="Agouti_dom"/>
</dbReference>
<dbReference type="InterPro" id="IPR036836">
    <property type="entry name" value="Agouti_dom_sf"/>
</dbReference>
<dbReference type="PANTHER" id="PTHR16551">
    <property type="entry name" value="AGOUTI RELATED"/>
    <property type="match status" value="1"/>
</dbReference>
<dbReference type="PANTHER" id="PTHR16551:SF1">
    <property type="entry name" value="AGOUTI-SIGNALING PROTEIN"/>
    <property type="match status" value="1"/>
</dbReference>
<dbReference type="Pfam" id="PF05039">
    <property type="entry name" value="Agouti"/>
    <property type="match status" value="1"/>
</dbReference>
<dbReference type="SMART" id="SM00792">
    <property type="entry name" value="Agouti"/>
    <property type="match status" value="1"/>
</dbReference>
<dbReference type="SUPFAM" id="SSF57055">
    <property type="entry name" value="Agouti-related protein"/>
    <property type="match status" value="1"/>
</dbReference>
<dbReference type="PROSITE" id="PS60024">
    <property type="entry name" value="AGOUTI_1"/>
    <property type="match status" value="1"/>
</dbReference>
<dbReference type="PROSITE" id="PS51150">
    <property type="entry name" value="AGOUTI_2"/>
    <property type="match status" value="1"/>
</dbReference>
<feature type="signal peptide" evidence="4">
    <location>
        <begin position="1"/>
        <end position="22"/>
    </location>
</feature>
<feature type="chain" id="PRO_0000323391" description="Agouti-signaling protein">
    <location>
        <begin position="23"/>
        <end position="132"/>
    </location>
</feature>
<feature type="domain" description="Agouti" evidence="5">
    <location>
        <begin position="93"/>
        <end position="132"/>
    </location>
</feature>
<feature type="region of interest" description="Disordered" evidence="6">
    <location>
        <begin position="57"/>
        <end position="88"/>
    </location>
</feature>
<feature type="compositionally biased region" description="Basic and acidic residues" evidence="6">
    <location>
        <begin position="63"/>
        <end position="79"/>
    </location>
</feature>
<feature type="glycosylation site" description="N-linked (GlcNAc...) asparagine" evidence="4">
    <location>
        <position position="39"/>
    </location>
</feature>
<feature type="disulfide bond" evidence="5">
    <location>
        <begin position="93"/>
        <end position="108"/>
    </location>
</feature>
<feature type="disulfide bond" evidence="5">
    <location>
        <begin position="100"/>
        <end position="114"/>
    </location>
</feature>
<feature type="disulfide bond" evidence="5">
    <location>
        <begin position="107"/>
        <end position="125"/>
    </location>
</feature>
<feature type="disulfide bond" evidence="5">
    <location>
        <begin position="111"/>
        <end position="132"/>
    </location>
</feature>
<feature type="disulfide bond" evidence="5">
    <location>
        <begin position="116"/>
        <end position="123"/>
    </location>
</feature>
<name>ASIP_MACAS</name>
<gene>
    <name type="primary">ASIP</name>
</gene>
<accession>A8CEN3</accession>